<accession>D2Y2K7</accession>
<reference key="1">
    <citation type="journal article" date="2010" name="J. Proteome Res.">
        <title>Molecular diversification of peptide toxins from the tarantula Haplopelma hainanum (Ornithoctonus hainana) venom based on transcriptomic, peptidomic, and genomic analyses.</title>
        <authorList>
            <person name="Tang X."/>
            <person name="Zhang Y."/>
            <person name="Hu W."/>
            <person name="Xu D."/>
            <person name="Tao H."/>
            <person name="Yang X."/>
            <person name="Li Y."/>
            <person name="Jiang L."/>
            <person name="Liang S."/>
        </authorList>
    </citation>
    <scope>NUCLEOTIDE SEQUENCE [LARGE SCALE GENOMIC DNA]</scope>
    <scope>PROTEIN SEQUENCE OF 49-85</scope>
    <scope>IDENTIFICATION BY MASS SPECTROMETRY</scope>
    <source>
        <tissue>Venom</tissue>
        <tissue>Venom gland</tissue>
    </source>
</reference>
<reference key="2">
    <citation type="journal article" date="2010" name="Dong Wu Xue Yan Jiu">
        <title>Isolation and characterization of Hainantoxin-II, a new neurotoxic peptide from the Chinese bird spider (Haplopelma hainanum).</title>
        <authorList>
            <person name="Pan J.Y."/>
            <person name="Yu Z.Q."/>
        </authorList>
    </citation>
    <scope>PROTEIN SEQUENCE OF 49-85</scope>
    <scope>FUNCTION</scope>
    <scope>MASS SPECTROMETRY</scope>
    <scope>TOXIC DOSE</scope>
    <source>
        <tissue>Venom</tissue>
    </source>
</reference>
<sequence>MKVTLIAILTCATVLVLHTTAAEELEAESQLMEVGMPDTELAAVDEERLFECSVSCEIEKEGNKDCKKKKCKGGWKCKFNMCVKV</sequence>
<protein>
    <recommendedName>
        <fullName>U4-theraphotoxin-Hhn1a</fullName>
        <shortName>U4-TRTX-Hhn1a</shortName>
    </recommendedName>
    <alternativeName>
        <fullName>Hainantoxin-II.20</fullName>
        <shortName>HNTX-II.20</shortName>
    </alternativeName>
    <alternativeName>
        <fullName>Peptide F8-20.15</fullName>
    </alternativeName>
</protein>
<keyword id="KW-0903">Direct protein sequencing</keyword>
<keyword id="KW-1015">Disulfide bond</keyword>
<keyword id="KW-0528">Neurotoxin</keyword>
<keyword id="KW-0629">Postsynaptic neurotoxin</keyword>
<keyword id="KW-0964">Secreted</keyword>
<keyword id="KW-0732">Signal</keyword>
<keyword id="KW-0800">Toxin</keyword>
<organism>
    <name type="scientific">Cyriopagopus hainanus</name>
    <name type="common">Chinese bird spider</name>
    <name type="synonym">Haplopelma hainanum</name>
    <dbReference type="NCBI Taxonomy" id="209901"/>
    <lineage>
        <taxon>Eukaryota</taxon>
        <taxon>Metazoa</taxon>
        <taxon>Ecdysozoa</taxon>
        <taxon>Arthropoda</taxon>
        <taxon>Chelicerata</taxon>
        <taxon>Arachnida</taxon>
        <taxon>Araneae</taxon>
        <taxon>Mygalomorphae</taxon>
        <taxon>Theraphosidae</taxon>
        <taxon>Haplopelma</taxon>
    </lineage>
</organism>
<comment type="function">
    <text evidence="4">Neurotoxin active on both insects and mammals.</text>
</comment>
<comment type="subunit">
    <text>Monomer.</text>
</comment>
<comment type="subcellular location">
    <subcellularLocation>
        <location>Secreted</location>
    </subcellularLocation>
</comment>
<comment type="tissue specificity">
    <text>Expressed by the venom gland.</text>
</comment>
<comment type="mass spectrometry"/>
<comment type="toxic dose">
    <text evidence="4">LD(50) is 1.41 mg/kg by intracerebroventricular injection into mice.</text>
</comment>
<comment type="toxic dose">
    <text evidence="4">PD(50) is 16 mg/kg in cockroaches.</text>
</comment>
<comment type="similarity">
    <text evidence="5">Belongs to the neurotoxin 12 (Hwtx-2) family. 02 (Hwtx-2) subfamily.</text>
</comment>
<dbReference type="EMBL" id="GU293084">
    <property type="protein sequence ID" value="ADB56900.1"/>
    <property type="molecule type" value="Genomic_DNA"/>
</dbReference>
<dbReference type="SMR" id="D2Y2K7"/>
<dbReference type="ArachnoServer" id="AS001783">
    <property type="toxin name" value="U4-theraphotoxin-Hhn1a"/>
</dbReference>
<dbReference type="GO" id="GO:0005576">
    <property type="term" value="C:extracellular region"/>
    <property type="evidence" value="ECO:0007669"/>
    <property type="project" value="UniProtKB-SubCell"/>
</dbReference>
<dbReference type="GO" id="GO:0035792">
    <property type="term" value="C:host cell postsynaptic membrane"/>
    <property type="evidence" value="ECO:0007669"/>
    <property type="project" value="UniProtKB-KW"/>
</dbReference>
<dbReference type="GO" id="GO:0090729">
    <property type="term" value="F:toxin activity"/>
    <property type="evidence" value="ECO:0007669"/>
    <property type="project" value="UniProtKB-KW"/>
</dbReference>
<dbReference type="InterPro" id="IPR012625">
    <property type="entry name" value="Hwtx-2-like"/>
</dbReference>
<dbReference type="Pfam" id="PF08089">
    <property type="entry name" value="Toxin_20"/>
    <property type="match status" value="1"/>
</dbReference>
<dbReference type="SUPFAM" id="SSF57059">
    <property type="entry name" value="omega toxin-like"/>
    <property type="match status" value="1"/>
</dbReference>
<dbReference type="PROSITE" id="PS60022">
    <property type="entry name" value="HWTX_2"/>
    <property type="match status" value="1"/>
</dbReference>
<name>H2A20_CYRHA</name>
<proteinExistence type="evidence at protein level"/>
<feature type="signal peptide" evidence="2">
    <location>
        <begin position="1"/>
        <end position="22"/>
    </location>
</feature>
<feature type="propeptide" id="PRO_0000400755" evidence="3 4">
    <location>
        <begin position="23"/>
        <end position="48"/>
    </location>
</feature>
<feature type="peptide" id="PRO_0000400756" description="U4-theraphotoxin-Hhn1a">
    <location>
        <begin position="49"/>
        <end position="85"/>
    </location>
</feature>
<feature type="disulfide bond" evidence="1">
    <location>
        <begin position="52"/>
        <end position="66"/>
    </location>
</feature>
<feature type="disulfide bond" evidence="1">
    <location>
        <begin position="56"/>
        <end position="77"/>
    </location>
</feature>
<feature type="disulfide bond" evidence="1">
    <location>
        <begin position="71"/>
        <end position="82"/>
    </location>
</feature>
<evidence type="ECO:0000250" key="1"/>
<evidence type="ECO:0000255" key="2"/>
<evidence type="ECO:0000269" key="3">
    <source>
    </source>
</evidence>
<evidence type="ECO:0000269" key="4">
    <source>
    </source>
</evidence>
<evidence type="ECO:0000305" key="5"/>